<evidence type="ECO:0000255" key="1">
    <source>
        <dbReference type="HAMAP-Rule" id="MF_01346"/>
    </source>
</evidence>
<protein>
    <recommendedName>
        <fullName evidence="1">ATP synthase subunit alpha</fullName>
        <ecNumber evidence="1">7.1.2.2</ecNumber>
    </recommendedName>
    <alternativeName>
        <fullName evidence="1">ATP synthase F1 sector subunit alpha</fullName>
    </alternativeName>
    <alternativeName>
        <fullName evidence="1">F-ATPase subunit alpha</fullName>
    </alternativeName>
</protein>
<comment type="function">
    <text evidence="1">Produces ATP from ADP in the presence of a proton gradient across the membrane. The alpha chain is a regulatory subunit.</text>
</comment>
<comment type="catalytic activity">
    <reaction evidence="1">
        <text>ATP + H2O + 4 H(+)(in) = ADP + phosphate + 5 H(+)(out)</text>
        <dbReference type="Rhea" id="RHEA:57720"/>
        <dbReference type="ChEBI" id="CHEBI:15377"/>
        <dbReference type="ChEBI" id="CHEBI:15378"/>
        <dbReference type="ChEBI" id="CHEBI:30616"/>
        <dbReference type="ChEBI" id="CHEBI:43474"/>
        <dbReference type="ChEBI" id="CHEBI:456216"/>
        <dbReference type="EC" id="7.1.2.2"/>
    </reaction>
</comment>
<comment type="subunit">
    <text evidence="1">F-type ATPases have 2 components, CF(1) - the catalytic core - and CF(0) - the membrane proton channel. CF(1) has five subunits: alpha(3), beta(3), gamma(1), delta(1), epsilon(1). CF(0) has three main subunits: a(1), b(2) and c(9-12). The alpha and beta chains form an alternating ring which encloses part of the gamma chain. CF(1) is attached to CF(0) by a central stalk formed by the gamma and epsilon chains, while a peripheral stalk is formed by the delta and b chains.</text>
</comment>
<comment type="subcellular location">
    <subcellularLocation>
        <location evidence="1">Cell membrane</location>
        <topology evidence="1">Peripheral membrane protein</topology>
    </subcellularLocation>
</comment>
<comment type="similarity">
    <text evidence="1">Belongs to the ATPase alpha/beta chains family.</text>
</comment>
<organism>
    <name type="scientific">Pseudarthrobacter chlorophenolicus (strain ATCC 700700 / DSM 12829 / CIP 107037 / JCM 12360 / KCTC 9906 / NCIMB 13794 / A6)</name>
    <name type="common">Arthrobacter chlorophenolicus</name>
    <dbReference type="NCBI Taxonomy" id="452863"/>
    <lineage>
        <taxon>Bacteria</taxon>
        <taxon>Bacillati</taxon>
        <taxon>Actinomycetota</taxon>
        <taxon>Actinomycetes</taxon>
        <taxon>Micrococcales</taxon>
        <taxon>Micrococcaceae</taxon>
        <taxon>Pseudarthrobacter</taxon>
    </lineage>
</organism>
<dbReference type="EC" id="7.1.2.2" evidence="1"/>
<dbReference type="EMBL" id="CP001341">
    <property type="protein sequence ID" value="ACL40305.1"/>
    <property type="molecule type" value="Genomic_DNA"/>
</dbReference>
<dbReference type="RefSeq" id="WP_015937518.1">
    <property type="nucleotide sequence ID" value="NC_011886.1"/>
</dbReference>
<dbReference type="SMR" id="B8HAZ1"/>
<dbReference type="STRING" id="452863.Achl_2340"/>
<dbReference type="KEGG" id="ach:Achl_2340"/>
<dbReference type="eggNOG" id="COG0056">
    <property type="taxonomic scope" value="Bacteria"/>
</dbReference>
<dbReference type="HOGENOM" id="CLU_010091_2_1_11"/>
<dbReference type="OrthoDB" id="9803053at2"/>
<dbReference type="Proteomes" id="UP000002505">
    <property type="component" value="Chromosome"/>
</dbReference>
<dbReference type="GO" id="GO:0005886">
    <property type="term" value="C:plasma membrane"/>
    <property type="evidence" value="ECO:0007669"/>
    <property type="project" value="UniProtKB-SubCell"/>
</dbReference>
<dbReference type="GO" id="GO:0045259">
    <property type="term" value="C:proton-transporting ATP synthase complex"/>
    <property type="evidence" value="ECO:0007669"/>
    <property type="project" value="UniProtKB-KW"/>
</dbReference>
<dbReference type="GO" id="GO:0043531">
    <property type="term" value="F:ADP binding"/>
    <property type="evidence" value="ECO:0007669"/>
    <property type="project" value="TreeGrafter"/>
</dbReference>
<dbReference type="GO" id="GO:0005524">
    <property type="term" value="F:ATP binding"/>
    <property type="evidence" value="ECO:0007669"/>
    <property type="project" value="UniProtKB-UniRule"/>
</dbReference>
<dbReference type="GO" id="GO:0046933">
    <property type="term" value="F:proton-transporting ATP synthase activity, rotational mechanism"/>
    <property type="evidence" value="ECO:0007669"/>
    <property type="project" value="UniProtKB-UniRule"/>
</dbReference>
<dbReference type="CDD" id="cd18113">
    <property type="entry name" value="ATP-synt_F1_alpha_C"/>
    <property type="match status" value="1"/>
</dbReference>
<dbReference type="CDD" id="cd18116">
    <property type="entry name" value="ATP-synt_F1_alpha_N"/>
    <property type="match status" value="1"/>
</dbReference>
<dbReference type="CDD" id="cd01132">
    <property type="entry name" value="F1-ATPase_alpha_CD"/>
    <property type="match status" value="1"/>
</dbReference>
<dbReference type="FunFam" id="1.20.150.20:FF:000001">
    <property type="entry name" value="ATP synthase subunit alpha"/>
    <property type="match status" value="1"/>
</dbReference>
<dbReference type="FunFam" id="3.40.50.300:FF:000002">
    <property type="entry name" value="ATP synthase subunit alpha"/>
    <property type="match status" value="1"/>
</dbReference>
<dbReference type="Gene3D" id="2.40.30.20">
    <property type="match status" value="1"/>
</dbReference>
<dbReference type="Gene3D" id="1.20.150.20">
    <property type="entry name" value="ATP synthase alpha/beta chain, C-terminal domain"/>
    <property type="match status" value="1"/>
</dbReference>
<dbReference type="Gene3D" id="3.40.50.300">
    <property type="entry name" value="P-loop containing nucleotide triphosphate hydrolases"/>
    <property type="match status" value="1"/>
</dbReference>
<dbReference type="HAMAP" id="MF_01346">
    <property type="entry name" value="ATP_synth_alpha_bact"/>
    <property type="match status" value="1"/>
</dbReference>
<dbReference type="InterPro" id="IPR023366">
    <property type="entry name" value="ATP_synth_asu-like_sf"/>
</dbReference>
<dbReference type="InterPro" id="IPR000793">
    <property type="entry name" value="ATP_synth_asu_C"/>
</dbReference>
<dbReference type="InterPro" id="IPR038376">
    <property type="entry name" value="ATP_synth_asu_C_sf"/>
</dbReference>
<dbReference type="InterPro" id="IPR033732">
    <property type="entry name" value="ATP_synth_F1_a_nt-bd_dom"/>
</dbReference>
<dbReference type="InterPro" id="IPR005294">
    <property type="entry name" value="ATP_synth_F1_asu"/>
</dbReference>
<dbReference type="InterPro" id="IPR020003">
    <property type="entry name" value="ATPase_a/bsu_AS"/>
</dbReference>
<dbReference type="InterPro" id="IPR004100">
    <property type="entry name" value="ATPase_F1/V1/A1_a/bsu_N"/>
</dbReference>
<dbReference type="InterPro" id="IPR036121">
    <property type="entry name" value="ATPase_F1/V1/A1_a/bsu_N_sf"/>
</dbReference>
<dbReference type="InterPro" id="IPR000194">
    <property type="entry name" value="ATPase_F1/V1/A1_a/bsu_nucl-bd"/>
</dbReference>
<dbReference type="InterPro" id="IPR027417">
    <property type="entry name" value="P-loop_NTPase"/>
</dbReference>
<dbReference type="NCBIfam" id="TIGR00962">
    <property type="entry name" value="atpA"/>
    <property type="match status" value="1"/>
</dbReference>
<dbReference type="NCBIfam" id="NF009884">
    <property type="entry name" value="PRK13343.1"/>
    <property type="match status" value="1"/>
</dbReference>
<dbReference type="PANTHER" id="PTHR48082">
    <property type="entry name" value="ATP SYNTHASE SUBUNIT ALPHA, MITOCHONDRIAL"/>
    <property type="match status" value="1"/>
</dbReference>
<dbReference type="PANTHER" id="PTHR48082:SF2">
    <property type="entry name" value="ATP SYNTHASE SUBUNIT ALPHA, MITOCHONDRIAL"/>
    <property type="match status" value="1"/>
</dbReference>
<dbReference type="Pfam" id="PF00006">
    <property type="entry name" value="ATP-synt_ab"/>
    <property type="match status" value="1"/>
</dbReference>
<dbReference type="Pfam" id="PF00306">
    <property type="entry name" value="ATP-synt_ab_C"/>
    <property type="match status" value="1"/>
</dbReference>
<dbReference type="Pfam" id="PF02874">
    <property type="entry name" value="ATP-synt_ab_N"/>
    <property type="match status" value="1"/>
</dbReference>
<dbReference type="SUPFAM" id="SSF47917">
    <property type="entry name" value="C-terminal domain of alpha and beta subunits of F1 ATP synthase"/>
    <property type="match status" value="1"/>
</dbReference>
<dbReference type="SUPFAM" id="SSF50615">
    <property type="entry name" value="N-terminal domain of alpha and beta subunits of F1 ATP synthase"/>
    <property type="match status" value="1"/>
</dbReference>
<dbReference type="SUPFAM" id="SSF52540">
    <property type="entry name" value="P-loop containing nucleoside triphosphate hydrolases"/>
    <property type="match status" value="1"/>
</dbReference>
<dbReference type="PROSITE" id="PS00152">
    <property type="entry name" value="ATPASE_ALPHA_BETA"/>
    <property type="match status" value="1"/>
</dbReference>
<accession>B8HAZ1</accession>
<reference key="1">
    <citation type="submission" date="2009-01" db="EMBL/GenBank/DDBJ databases">
        <title>Complete sequence of chromosome of Arthrobacter chlorophenolicus A6.</title>
        <authorList>
            <consortium name="US DOE Joint Genome Institute"/>
            <person name="Lucas S."/>
            <person name="Copeland A."/>
            <person name="Lapidus A."/>
            <person name="Glavina del Rio T."/>
            <person name="Tice H."/>
            <person name="Bruce D."/>
            <person name="Goodwin L."/>
            <person name="Pitluck S."/>
            <person name="Goltsman E."/>
            <person name="Clum A."/>
            <person name="Larimer F."/>
            <person name="Land M."/>
            <person name="Hauser L."/>
            <person name="Kyrpides N."/>
            <person name="Mikhailova N."/>
            <person name="Jansson J."/>
            <person name="Richardson P."/>
        </authorList>
    </citation>
    <scope>NUCLEOTIDE SEQUENCE [LARGE SCALE GENOMIC DNA]</scope>
    <source>
        <strain>ATCC 700700 / DSM 12829 / CIP 107037 / JCM 12360 / KCTC 9906 / NCIMB 13794 / A6</strain>
    </source>
</reference>
<feature type="chain" id="PRO_1000166514" description="ATP synthase subunit alpha">
    <location>
        <begin position="1"/>
        <end position="545"/>
    </location>
</feature>
<feature type="binding site" evidence="1">
    <location>
        <begin position="173"/>
        <end position="180"/>
    </location>
    <ligand>
        <name>ATP</name>
        <dbReference type="ChEBI" id="CHEBI:30616"/>
    </ligand>
</feature>
<feature type="site" description="Required for activity" evidence="1">
    <location>
        <position position="374"/>
    </location>
</feature>
<name>ATPA_PSECP</name>
<gene>
    <name evidence="1" type="primary">atpA</name>
    <name type="ordered locus">Achl_2340</name>
</gene>
<proteinExistence type="inferred from homology"/>
<sequence>MAELTINADDVRNALNEFAASYEPGNAERVEVGRVTTASDGIARVEGLPSVMANELLRFEDGTLGLAQNLDVREIGVIILGDFTGIEEGQEVHRTGQVLSVPVGDAFLGRVVDPLGVPIDDLGEIKAETTRALELQAPGVTQRKSVHEPMQTGLKAIDAMIPIGRGQRQLIIGDRQTGKSAIAIDTIINQKANWASGDVTKQVRCIYVAIGQKASTIAAVRQTLEENGALEYTTIVASPASDPAGFKYLAPYAGSAIGQHWMYGGKHVLIVFDDLSKQAEAYRAVSLLLRRPPGREAYPGDVFYLHSRLLERCAKLSDELGAGSMTGLPLIETKANDVSAYIPTNVISITDGQIFLQSDLFNANQRPAVDVGVSVSRVGGAAQVKSMKKVSGTLKLELAQYRDMQAFAMFASDLDAASRQQLTRGARLMELLKQGQYSPFPVEDQVVSIWAGTNGHLDDVPVEDVNRFETEFLEHLKHKSSILTTLAQTNVMDDDTAAALKSSIIDFKKGFFGEGDNHLVGAGHEAHDAISEGEVDQEKIVKQKR</sequence>
<keyword id="KW-0066">ATP synthesis</keyword>
<keyword id="KW-0067">ATP-binding</keyword>
<keyword id="KW-1003">Cell membrane</keyword>
<keyword id="KW-0139">CF(1)</keyword>
<keyword id="KW-0375">Hydrogen ion transport</keyword>
<keyword id="KW-0406">Ion transport</keyword>
<keyword id="KW-0472">Membrane</keyword>
<keyword id="KW-0547">Nucleotide-binding</keyword>
<keyword id="KW-1278">Translocase</keyword>
<keyword id="KW-0813">Transport</keyword>